<comment type="function">
    <text evidence="2 6">Type I keratin involved in the formation and maintenance of various skin appendages, specifically in determining shape and orientation of hair. Required for the correct growth of hair follicles, in particular for the persistence of the anagen (growth) state. Modulates the function of TNF-alpha in the specific context of hair cycling. Regulates protein synthesis and epithelial cell growth through binding to the adapter protein SFN and by stimulating Akt/mTOR pathway. Involved in tissue repair. May be a marker of basal cell differentiation in complex epithelia and therefore indicative of a certain type of epithelial 'stem cells'. Acts as a promoter of epithelial proliferation by acting a regulator of immune response in skin: promotes Th1/Th17-dominated immune environment contributing to the development of basaloid skin tumors. May act as an autoantigen in the immunopathogenesis of psoriasis, with certain peptide regions being a major target for autoreactive T-cells and hence causing their proliferation.</text>
</comment>
<comment type="subunit">
    <text evidence="6 10">Heterodimer of a type I and a type II keratin. KRT17 associates with KRT6 isomers (KRT6A or KRT6B). Interacts with TRADD and SFN (By similarity).</text>
</comment>
<comment type="subcellular location">
    <subcellularLocation>
        <location evidence="6">Cytoplasm</location>
    </subcellularLocation>
</comment>
<comment type="PTM">
    <text evidence="1">Phosphorylation at Ser-42 occurs in a growth- and stress-dependent fashion in skin keratinocytes, it has no effect on filament organization.</text>
</comment>
<comment type="miscellaneous">
    <text evidence="10">There are two types of cytoskeletal and microfibrillar keratin: I (acidic; 40-55 kDa) and II (neutral to basic; 56-70 kDa).</text>
</comment>
<comment type="similarity">
    <text evidence="8">Belongs to the intermediate filament family.</text>
</comment>
<name>K1C17_BOVIN</name>
<keyword id="KW-0175">Coiled coil</keyword>
<keyword id="KW-0963">Cytoplasm</keyword>
<keyword id="KW-0403">Intermediate filament</keyword>
<keyword id="KW-1017">Isopeptide bond</keyword>
<keyword id="KW-0416">Keratin</keyword>
<keyword id="KW-0597">Phosphoprotein</keyword>
<keyword id="KW-1185">Reference proteome</keyword>
<keyword id="KW-0832">Ubl conjugation</keyword>
<proteinExistence type="evidence at transcript level"/>
<sequence>MTTTIRHFSSGSIKGSSGLAGGSSRSCRVSGSLGGGSCRLGSAGGLGSGLGGSSYSSCYSFGSGGGYGSGGYVSGGYGGGFGGVDGLLVGGEKATMQNLNDRLASYLDKVRALEEANTELELKIRDWYQKQAPGPAPDYSSYFKTIEDLRNKIHTATVDNANLLLQIDNARLAADDFRTKFETEQALRVSVEADINGLRRVLDELTLARADLEMQIENLKEELAYLRKNHEEEMKALRGQVGGEINVEMDAAPGVDLSRILNEMRDQYEKMAEKNRKDAEDWFFSKTEELNREVATNSELVQSGKSEISELRRTLQALEIELQSQLSMKASLEGSLAETENRYCMQLSQIQGLIGSVEEQLAQLRCEMEQQNQEYKILLDVKTRLEQEIATYRRLLEGEDAHLTQYKTKEPVTTRQVRTIVEEVQDGRVISSREQVHQTSH</sequence>
<evidence type="ECO:0000250" key="1"/>
<evidence type="ECO:0000250" key="2">
    <source>
        <dbReference type="UniProtKB" id="Q04695"/>
    </source>
</evidence>
<evidence type="ECO:0000250" key="3">
    <source>
        <dbReference type="UniProtKB" id="Q61414"/>
    </source>
</evidence>
<evidence type="ECO:0000250" key="4">
    <source>
        <dbReference type="UniProtKB" id="Q6IFU8"/>
    </source>
</evidence>
<evidence type="ECO:0000250" key="5">
    <source>
        <dbReference type="UniProtKB" id="Q6IFV3"/>
    </source>
</evidence>
<evidence type="ECO:0000250" key="6">
    <source>
        <dbReference type="UniProtKB" id="Q9QWL7"/>
    </source>
</evidence>
<evidence type="ECO:0000255" key="7"/>
<evidence type="ECO:0000255" key="8">
    <source>
        <dbReference type="PROSITE-ProRule" id="PRU01188"/>
    </source>
</evidence>
<evidence type="ECO:0000256" key="9">
    <source>
        <dbReference type="SAM" id="MobiDB-lite"/>
    </source>
</evidence>
<evidence type="ECO:0000305" key="10"/>
<evidence type="ECO:0000312" key="11">
    <source>
        <dbReference type="EMBL" id="AAI42138.1"/>
    </source>
</evidence>
<evidence type="ECO:0000312" key="12">
    <source>
        <dbReference type="EMBL" id="ABM06133.1"/>
    </source>
</evidence>
<dbReference type="EMBL" id="BT029882">
    <property type="protein sequence ID" value="ABM06133.1"/>
    <property type="molecule type" value="mRNA"/>
</dbReference>
<dbReference type="EMBL" id="BC142137">
    <property type="protein sequence ID" value="AAI42138.1"/>
    <property type="molecule type" value="mRNA"/>
</dbReference>
<dbReference type="RefSeq" id="NP_001098792.1">
    <property type="nucleotide sequence ID" value="NM_001105322.1"/>
</dbReference>
<dbReference type="RefSeq" id="XP_005220728.1">
    <property type="nucleotide sequence ID" value="XM_005220671.2"/>
</dbReference>
<dbReference type="SMR" id="A1L595"/>
<dbReference type="FunCoup" id="A1L595">
    <property type="interactions" value="149"/>
</dbReference>
<dbReference type="STRING" id="9913.ENSBTAP00000008948"/>
<dbReference type="PaxDb" id="9913-ENSBTAP00000008948"/>
<dbReference type="PeptideAtlas" id="A1L595"/>
<dbReference type="GeneID" id="281889"/>
<dbReference type="KEGG" id="bta:281889"/>
<dbReference type="CTD" id="3872"/>
<dbReference type="eggNOG" id="ENOG502QTM6">
    <property type="taxonomic scope" value="Eukaryota"/>
</dbReference>
<dbReference type="HOGENOM" id="CLU_012560_8_1_1"/>
<dbReference type="InParanoid" id="A1L595"/>
<dbReference type="OrthoDB" id="2441647at2759"/>
<dbReference type="TreeFam" id="TF332742"/>
<dbReference type="Proteomes" id="UP000009136">
    <property type="component" value="Unplaced"/>
</dbReference>
<dbReference type="GO" id="GO:0005737">
    <property type="term" value="C:cytoplasm"/>
    <property type="evidence" value="ECO:0007669"/>
    <property type="project" value="UniProtKB-SubCell"/>
</dbReference>
<dbReference type="GO" id="GO:0005856">
    <property type="term" value="C:cytoskeleton"/>
    <property type="evidence" value="ECO:0000318"/>
    <property type="project" value="GO_Central"/>
</dbReference>
<dbReference type="GO" id="GO:0005882">
    <property type="term" value="C:intermediate filament"/>
    <property type="evidence" value="ECO:0007669"/>
    <property type="project" value="UniProtKB-KW"/>
</dbReference>
<dbReference type="GO" id="GO:0005198">
    <property type="term" value="F:structural molecule activity"/>
    <property type="evidence" value="ECO:0007669"/>
    <property type="project" value="InterPro"/>
</dbReference>
<dbReference type="GO" id="GO:0030855">
    <property type="term" value="P:epithelial cell differentiation"/>
    <property type="evidence" value="ECO:0000318"/>
    <property type="project" value="GO_Central"/>
</dbReference>
<dbReference type="GO" id="GO:0031069">
    <property type="term" value="P:hair follicle morphogenesis"/>
    <property type="evidence" value="ECO:0000250"/>
    <property type="project" value="UniProtKB"/>
</dbReference>
<dbReference type="GO" id="GO:0045109">
    <property type="term" value="P:intermediate filament organization"/>
    <property type="evidence" value="ECO:0000318"/>
    <property type="project" value="GO_Central"/>
</dbReference>
<dbReference type="FunFam" id="1.20.5.1160:FF:000002">
    <property type="entry name" value="Type I keratin 10"/>
    <property type="match status" value="1"/>
</dbReference>
<dbReference type="FunFam" id="1.20.5.170:FF:000002">
    <property type="entry name" value="Type I keratin KA11"/>
    <property type="match status" value="1"/>
</dbReference>
<dbReference type="FunFam" id="1.20.5.500:FF:000001">
    <property type="entry name" value="Type II keratin 23"/>
    <property type="match status" value="1"/>
</dbReference>
<dbReference type="Gene3D" id="1.20.5.170">
    <property type="match status" value="1"/>
</dbReference>
<dbReference type="Gene3D" id="1.20.5.500">
    <property type="entry name" value="Single helix bin"/>
    <property type="match status" value="1"/>
</dbReference>
<dbReference type="Gene3D" id="1.20.5.1160">
    <property type="entry name" value="Vasodilator-stimulated phosphoprotein"/>
    <property type="match status" value="1"/>
</dbReference>
<dbReference type="InterPro" id="IPR018039">
    <property type="entry name" value="IF_conserved"/>
</dbReference>
<dbReference type="InterPro" id="IPR039008">
    <property type="entry name" value="IF_rod_dom"/>
</dbReference>
<dbReference type="InterPro" id="IPR002957">
    <property type="entry name" value="Keratin_I"/>
</dbReference>
<dbReference type="PANTHER" id="PTHR23239">
    <property type="entry name" value="INTERMEDIATE FILAMENT"/>
    <property type="match status" value="1"/>
</dbReference>
<dbReference type="PANTHER" id="PTHR23239:SF180">
    <property type="entry name" value="KERATIN, TYPE I CYTOSKELETAL 17"/>
    <property type="match status" value="1"/>
</dbReference>
<dbReference type="Pfam" id="PF00038">
    <property type="entry name" value="Filament"/>
    <property type="match status" value="1"/>
</dbReference>
<dbReference type="PRINTS" id="PR01248">
    <property type="entry name" value="TYPE1KERATIN"/>
</dbReference>
<dbReference type="SMART" id="SM01391">
    <property type="entry name" value="Filament"/>
    <property type="match status" value="1"/>
</dbReference>
<dbReference type="SUPFAM" id="SSF64593">
    <property type="entry name" value="Intermediate filament protein, coiled coil region"/>
    <property type="match status" value="2"/>
</dbReference>
<dbReference type="SUPFAM" id="SSF46579">
    <property type="entry name" value="Prefoldin"/>
    <property type="match status" value="1"/>
</dbReference>
<dbReference type="PROSITE" id="PS00226">
    <property type="entry name" value="IF_ROD_1"/>
    <property type="match status" value="1"/>
</dbReference>
<dbReference type="PROSITE" id="PS51842">
    <property type="entry name" value="IF_ROD_2"/>
    <property type="match status" value="1"/>
</dbReference>
<reference evidence="12" key="1">
    <citation type="journal article" date="2005" name="BMC Genomics">
        <title>Characterization of 954 bovine full-CDS cDNA sequences.</title>
        <authorList>
            <person name="Harhay G.P."/>
            <person name="Sonstegard T.S."/>
            <person name="Keele J.W."/>
            <person name="Heaton M.P."/>
            <person name="Clawson M.L."/>
            <person name="Snelling W.M."/>
            <person name="Wiedmann R.T."/>
            <person name="Van Tassell C.P."/>
            <person name="Smith T.P.L."/>
        </authorList>
    </citation>
    <scope>NUCLEOTIDE SEQUENCE [LARGE SCALE MRNA]</scope>
</reference>
<reference evidence="11" key="2">
    <citation type="submission" date="2007-06" db="EMBL/GenBank/DDBJ databases">
        <authorList>
            <consortium name="NIH - Mammalian Gene Collection (MGC) project"/>
        </authorList>
    </citation>
    <scope>NUCLEOTIDE SEQUENCE [LARGE SCALE MRNA]</scope>
    <source>
        <strain evidence="11">Hereford</strain>
        <tissue evidence="11">Fetal skin</tissue>
    </source>
</reference>
<organism>
    <name type="scientific">Bos taurus</name>
    <name type="common">Bovine</name>
    <dbReference type="NCBI Taxonomy" id="9913"/>
    <lineage>
        <taxon>Eukaryota</taxon>
        <taxon>Metazoa</taxon>
        <taxon>Chordata</taxon>
        <taxon>Craniata</taxon>
        <taxon>Vertebrata</taxon>
        <taxon>Euteleostomi</taxon>
        <taxon>Mammalia</taxon>
        <taxon>Eutheria</taxon>
        <taxon>Laurasiatheria</taxon>
        <taxon>Artiodactyla</taxon>
        <taxon>Ruminantia</taxon>
        <taxon>Pecora</taxon>
        <taxon>Bovidae</taxon>
        <taxon>Bovinae</taxon>
        <taxon>Bos</taxon>
    </lineage>
</organism>
<gene>
    <name evidence="12" type="primary">KRT17</name>
</gene>
<protein>
    <recommendedName>
        <fullName>Keratin, type I cytoskeletal 17</fullName>
    </recommendedName>
    <alternativeName>
        <fullName>Cytokeratin-17</fullName>
        <shortName>CK-17</shortName>
    </alternativeName>
    <alternativeName>
        <fullName>Keratin-17</fullName>
        <shortName>K17</shortName>
    </alternativeName>
</protein>
<accession>A1L595</accession>
<accession>A5PJJ6</accession>
<feature type="chain" id="PRO_0000310577" description="Keratin, type I cytoskeletal 17">
    <location>
        <begin position="1"/>
        <end position="441"/>
    </location>
</feature>
<feature type="domain" description="IF rod" evidence="8">
    <location>
        <begin position="92"/>
        <end position="403"/>
    </location>
</feature>
<feature type="region of interest" description="Head">
    <location>
        <begin position="1"/>
        <end position="91"/>
    </location>
</feature>
<feature type="region of interest" description="Disordered" evidence="9">
    <location>
        <begin position="1"/>
        <end position="23"/>
    </location>
</feature>
<feature type="region of interest" description="Coil 1A" evidence="7">
    <location>
        <begin position="92"/>
        <end position="128"/>
    </location>
</feature>
<feature type="region of interest" description="Linker 1" evidence="7">
    <location>
        <begin position="129"/>
        <end position="146"/>
    </location>
</feature>
<feature type="region of interest" description="Coil 1B" evidence="7">
    <location>
        <begin position="147"/>
        <end position="238"/>
    </location>
</feature>
<feature type="region of interest" description="Linker 12" evidence="7">
    <location>
        <begin position="239"/>
        <end position="258"/>
    </location>
</feature>
<feature type="region of interest" description="Coil 2" evidence="7">
    <location>
        <begin position="259"/>
        <end position="400"/>
    </location>
</feature>
<feature type="region of interest" description="Tail" evidence="7">
    <location>
        <begin position="401"/>
        <end position="441"/>
    </location>
</feature>
<feature type="compositionally biased region" description="Low complexity" evidence="9">
    <location>
        <begin position="9"/>
        <end position="23"/>
    </location>
</feature>
<feature type="modified residue" description="Phosphoserine" evidence="2">
    <location>
        <position position="12"/>
    </location>
</feature>
<feature type="modified residue" description="Phosphoserine" evidence="3">
    <location>
        <position position="24"/>
    </location>
</feature>
<feature type="modified residue" description="Phosphoserine" evidence="2">
    <location>
        <position position="30"/>
    </location>
</feature>
<feature type="modified residue" description="Phosphoserine" evidence="4">
    <location>
        <position position="32"/>
    </location>
</feature>
<feature type="modified residue" description="Phosphoserine" evidence="2">
    <location>
        <position position="37"/>
    </location>
</feature>
<feature type="modified residue" description="Phosphoserine; by RPS6KA1" evidence="2">
    <location>
        <position position="42"/>
    </location>
</feature>
<feature type="modified residue" description="Phosphothreonine" evidence="2">
    <location>
        <position position="118"/>
    </location>
</feature>
<feature type="modified residue" description="Phosphothreonine" evidence="5">
    <location>
        <position position="287"/>
    </location>
</feature>
<feature type="modified residue" description="Phosphoserine" evidence="2">
    <location>
        <position position="331"/>
    </location>
</feature>
<feature type="cross-link" description="Glycyl lysine isopeptide (Lys-Gly) (interchain with G-Cter in SUMO1); alternate" evidence="2">
    <location>
        <position position="14"/>
    </location>
</feature>
<feature type="cross-link" description="Glycyl lysine isopeptide (Lys-Gly) (interchain with G-Cter in SUMO2); alternate" evidence="2">
    <location>
        <position position="14"/>
    </location>
</feature>
<feature type="cross-link" description="Glycyl lysine isopeptide (Lys-Gly) (interchain with G-Cter in SUMO2)" evidence="2">
    <location>
        <position position="286"/>
    </location>
</feature>
<feature type="cross-link" description="Glycyl lysine isopeptide (Lys-Gly) (interchain with G-Cter in SUMO1); alternate" evidence="2">
    <location>
        <position position="407"/>
    </location>
</feature>
<feature type="cross-link" description="Glycyl lysine isopeptide (Lys-Gly) (interchain with G-Cter in SUMO2); alternate" evidence="2">
    <location>
        <position position="407"/>
    </location>
</feature>
<feature type="cross-link" description="Glycyl lysine isopeptide (Lys-Gly) (interchain with G-Cter in SUMO1); alternate" evidence="2">
    <location>
        <position position="409"/>
    </location>
</feature>
<feature type="cross-link" description="Glycyl lysine isopeptide (Lys-Gly) (interchain with G-Cter in SUMO2); alternate" evidence="2">
    <location>
        <position position="409"/>
    </location>
</feature>
<feature type="sequence conflict" description="In Ref. 2; AAI42138." evidence="10" ref="2">
    <original>G</original>
    <variation>S</variation>
    <location>
        <position position="66"/>
    </location>
</feature>